<sequence length="37" mass="3866">LYSIASSAIGDFGFGDSKLDFAVSRGIDDIMVDLAAK</sequence>
<name>FENR_IMPCY</name>
<keyword id="KW-0150">Chloroplast</keyword>
<keyword id="KW-0903">Direct protein sequencing</keyword>
<keyword id="KW-0249">Electron transport</keyword>
<keyword id="KW-0274">FAD</keyword>
<keyword id="KW-0285">Flavoprotein</keyword>
<keyword id="KW-0472">Membrane</keyword>
<keyword id="KW-0521">NADP</keyword>
<keyword id="KW-0560">Oxidoreductase</keyword>
<keyword id="KW-0602">Photosynthesis</keyword>
<keyword id="KW-0934">Plastid</keyword>
<keyword id="KW-0793">Thylakoid</keyword>
<keyword id="KW-0813">Transport</keyword>
<comment type="function">
    <text evidence="1">May play a key role in regulating the relative amounts of cyclic and non-cyclic electron flow to meet the demands of the plant for ATP and reducing power.</text>
</comment>
<comment type="catalytic activity">
    <reaction>
        <text>2 reduced [2Fe-2S]-[ferredoxin] + NADP(+) + H(+) = 2 oxidized [2Fe-2S]-[ferredoxin] + NADPH</text>
        <dbReference type="Rhea" id="RHEA:20125"/>
        <dbReference type="Rhea" id="RHEA-COMP:10000"/>
        <dbReference type="Rhea" id="RHEA-COMP:10001"/>
        <dbReference type="ChEBI" id="CHEBI:15378"/>
        <dbReference type="ChEBI" id="CHEBI:33737"/>
        <dbReference type="ChEBI" id="CHEBI:33738"/>
        <dbReference type="ChEBI" id="CHEBI:57783"/>
        <dbReference type="ChEBI" id="CHEBI:58349"/>
        <dbReference type="EC" id="1.18.1.2"/>
    </reaction>
</comment>
<comment type="cofactor">
    <cofactor evidence="2">
        <name>FAD</name>
        <dbReference type="ChEBI" id="CHEBI:57692"/>
    </cofactor>
</comment>
<comment type="pathway">
    <text>Energy metabolism; photosynthesis.</text>
</comment>
<comment type="subcellular location">
    <subcellularLocation>
        <location evidence="1">Plastid</location>
        <location evidence="1">Chloroplast stroma</location>
    </subcellularLocation>
    <subcellularLocation>
        <location evidence="1">Plastid</location>
        <location evidence="1">Chloroplast thylakoid membrane</location>
        <topology evidence="1">Peripheral membrane protein</topology>
        <orientation evidence="1">Stromal side</orientation>
    </subcellularLocation>
    <text evidence="1">In the vicinity of the photosystem I in the non-stacked and fringe portion of the membrane.</text>
</comment>
<comment type="similarity">
    <text evidence="2">Belongs to the ferredoxin--NADP reductase type 1 family.</text>
</comment>
<organism>
    <name type="scientific">Imperata cylindrica</name>
    <name type="common">Cogon grass</name>
    <dbReference type="NCBI Taxonomy" id="80369"/>
    <lineage>
        <taxon>Eukaryota</taxon>
        <taxon>Viridiplantae</taxon>
        <taxon>Streptophyta</taxon>
        <taxon>Embryophyta</taxon>
        <taxon>Tracheophyta</taxon>
        <taxon>Spermatophyta</taxon>
        <taxon>Magnoliopsida</taxon>
        <taxon>Liliopsida</taxon>
        <taxon>Poales</taxon>
        <taxon>Poaceae</taxon>
        <taxon>PACMAD clade</taxon>
        <taxon>Panicoideae</taxon>
        <taxon>Andropogonodae</taxon>
        <taxon>Andropogoneae</taxon>
        <taxon>Germainiinae</taxon>
        <taxon>Imperata</taxon>
    </lineage>
</organism>
<reference evidence="2" key="1">
    <citation type="submission" date="2004-07" db="UniProtKB">
        <authorList>
            <person name="Chang I.-F."/>
            <person name="Kangling Z."/>
            <person name="Chou C.-H."/>
        </authorList>
    </citation>
    <scope>PROTEIN SEQUENCE</scope>
    <source>
        <strain>cv. Major</strain>
        <tissue>Leaf</tissue>
    </source>
</reference>
<evidence type="ECO:0000250" key="1"/>
<evidence type="ECO:0000305" key="2"/>
<proteinExistence type="evidence at protein level"/>
<dbReference type="EC" id="1.18.1.2"/>
<dbReference type="SMR" id="P84210"/>
<dbReference type="UniPathway" id="UPA00091"/>
<dbReference type="GO" id="GO:0009570">
    <property type="term" value="C:chloroplast stroma"/>
    <property type="evidence" value="ECO:0007669"/>
    <property type="project" value="UniProtKB-SubCell"/>
</dbReference>
<dbReference type="GO" id="GO:0009535">
    <property type="term" value="C:chloroplast thylakoid membrane"/>
    <property type="evidence" value="ECO:0007669"/>
    <property type="project" value="UniProtKB-SubCell"/>
</dbReference>
<dbReference type="GO" id="GO:0004324">
    <property type="term" value="F:ferredoxin-NADP+ reductase activity"/>
    <property type="evidence" value="ECO:0007669"/>
    <property type="project" value="UniProtKB-EC"/>
</dbReference>
<dbReference type="GO" id="GO:0015979">
    <property type="term" value="P:photosynthesis"/>
    <property type="evidence" value="ECO:0007669"/>
    <property type="project" value="UniProtKB-UniPathway"/>
</dbReference>
<protein>
    <recommendedName>
        <fullName>Ferredoxin--NADP reductase, chloroplastic</fullName>
        <shortName>FNR</shortName>
        <ecNumber>1.18.1.2</ecNumber>
    </recommendedName>
</protein>
<accession>P84210</accession>
<feature type="chain" id="PRO_0000167631" description="Ferredoxin--NADP reductase, chloroplastic">
    <location>
        <begin position="1" status="less than"/>
        <end position="37" status="greater than"/>
    </location>
</feature>
<feature type="binding site" evidence="1">
    <location>
        <position position="3"/>
    </location>
    <ligand>
        <name>NADP(+)</name>
        <dbReference type="ChEBI" id="CHEBI:58349"/>
    </ligand>
</feature>
<feature type="binding site" evidence="1">
    <location>
        <begin position="24"/>
        <end position="25"/>
    </location>
    <ligand>
        <name>NADP(+)</name>
        <dbReference type="ChEBI" id="CHEBI:58349"/>
    </ligand>
</feature>
<feature type="non-consecutive residues" evidence="2">
    <location>
        <begin position="18"/>
        <end position="19"/>
    </location>
</feature>
<feature type="non-consecutive residues" evidence="2">
    <location>
        <begin position="25"/>
        <end position="26"/>
    </location>
</feature>
<feature type="non-terminal residue">
    <location>
        <position position="1"/>
    </location>
</feature>
<feature type="non-terminal residue">
    <location>
        <position position="37"/>
    </location>
</feature>